<feature type="chain" id="PRO_0000444466" description="Histone-lysine N-methyltransferase EZ1">
    <location>
        <begin position="1"/>
        <end position="895"/>
    </location>
</feature>
<feature type="domain" description="CXC" evidence="4">
    <location>
        <begin position="628"/>
        <end position="732"/>
    </location>
</feature>
<feature type="domain" description="SET" evidence="2">
    <location>
        <begin position="747"/>
        <end position="862"/>
    </location>
</feature>
<feature type="region of interest" description="Disordered" evidence="5">
    <location>
        <begin position="1"/>
        <end position="28"/>
    </location>
</feature>
<feature type="region of interest" description="Disordered" evidence="5">
    <location>
        <begin position="369"/>
        <end position="425"/>
    </location>
</feature>
<feature type="region of interest" description="Disordered" evidence="5">
    <location>
        <begin position="485"/>
        <end position="508"/>
    </location>
</feature>
<feature type="region of interest" description="Disordered" evidence="5">
    <location>
        <begin position="867"/>
        <end position="895"/>
    </location>
</feature>
<feature type="compositionally biased region" description="Low complexity" evidence="5">
    <location>
        <begin position="1"/>
        <end position="13"/>
    </location>
</feature>
<feature type="compositionally biased region" description="Polar residues" evidence="5">
    <location>
        <begin position="383"/>
        <end position="399"/>
    </location>
</feature>
<feature type="compositionally biased region" description="Basic and acidic residues" evidence="5">
    <location>
        <begin position="873"/>
        <end position="885"/>
    </location>
</feature>
<feature type="compositionally biased region" description="Basic residues" evidence="5">
    <location>
        <begin position="886"/>
        <end position="895"/>
    </location>
</feature>
<feature type="binding site" evidence="2">
    <location>
        <position position="861"/>
    </location>
    <ligand>
        <name>S-adenosyl-L-methionine</name>
        <dbReference type="ChEBI" id="CHEBI:59789"/>
    </ligand>
</feature>
<accession>Q84UI6</accession>
<name>EZ1_ORYSI</name>
<gene>
    <name evidence="8" type="primary">EZ1</name>
    <name evidence="8" type="synonym">SET1</name>
</gene>
<proteinExistence type="evidence at transcript level"/>
<organism>
    <name type="scientific">Oryza sativa subsp. indica</name>
    <name type="common">Rice</name>
    <dbReference type="NCBI Taxonomy" id="39946"/>
    <lineage>
        <taxon>Eukaryota</taxon>
        <taxon>Viridiplantae</taxon>
        <taxon>Streptophyta</taxon>
        <taxon>Embryophyta</taxon>
        <taxon>Tracheophyta</taxon>
        <taxon>Spermatophyta</taxon>
        <taxon>Magnoliopsida</taxon>
        <taxon>Liliopsida</taxon>
        <taxon>Poales</taxon>
        <taxon>Poaceae</taxon>
        <taxon>BOP clade</taxon>
        <taxon>Oryzoideae</taxon>
        <taxon>Oryzeae</taxon>
        <taxon>Oryzinae</taxon>
        <taxon>Oryza</taxon>
        <taxon>Oryza sativa</taxon>
    </lineage>
</organism>
<keyword id="KW-0156">Chromatin regulator</keyword>
<keyword id="KW-0489">Methyltransferase</keyword>
<keyword id="KW-0539">Nucleus</keyword>
<keyword id="KW-0949">S-adenosyl-L-methionine</keyword>
<keyword id="KW-0808">Transferase</keyword>
<dbReference type="EC" id="2.1.1.356" evidence="3"/>
<dbReference type="EMBL" id="AJ421722">
    <property type="protein sequence ID" value="CAD18871.3"/>
    <property type="molecule type" value="mRNA"/>
</dbReference>
<dbReference type="SMR" id="Q84UI6"/>
<dbReference type="GO" id="GO:0005634">
    <property type="term" value="C:nucleus"/>
    <property type="evidence" value="ECO:0000314"/>
    <property type="project" value="UniProtKB"/>
</dbReference>
<dbReference type="GO" id="GO:0031519">
    <property type="term" value="C:PcG protein complex"/>
    <property type="evidence" value="ECO:0007669"/>
    <property type="project" value="InterPro"/>
</dbReference>
<dbReference type="GO" id="GO:0003682">
    <property type="term" value="F:chromatin binding"/>
    <property type="evidence" value="ECO:0007669"/>
    <property type="project" value="TreeGrafter"/>
</dbReference>
<dbReference type="GO" id="GO:0140951">
    <property type="term" value="F:histone H3K27 trimethyltransferase activity"/>
    <property type="evidence" value="ECO:0007669"/>
    <property type="project" value="UniProtKB-EC"/>
</dbReference>
<dbReference type="GO" id="GO:0031507">
    <property type="term" value="P:heterochromatin formation"/>
    <property type="evidence" value="ECO:0007669"/>
    <property type="project" value="TreeGrafter"/>
</dbReference>
<dbReference type="GO" id="GO:0032259">
    <property type="term" value="P:methylation"/>
    <property type="evidence" value="ECO:0007669"/>
    <property type="project" value="UniProtKB-KW"/>
</dbReference>
<dbReference type="CDD" id="cd00167">
    <property type="entry name" value="SANT"/>
    <property type="match status" value="1"/>
</dbReference>
<dbReference type="CDD" id="cd10519">
    <property type="entry name" value="SET_EZH"/>
    <property type="match status" value="1"/>
</dbReference>
<dbReference type="FunFam" id="2.170.270.10:FF:000001">
    <property type="entry name" value="Putative histone-lysine N-methyltransferase EZH2"/>
    <property type="match status" value="1"/>
</dbReference>
<dbReference type="Gene3D" id="2.170.270.10">
    <property type="entry name" value="SET domain"/>
    <property type="match status" value="1"/>
</dbReference>
<dbReference type="InterPro" id="IPR026489">
    <property type="entry name" value="CXC_dom"/>
</dbReference>
<dbReference type="InterPro" id="IPR045318">
    <property type="entry name" value="EZH1/2-like"/>
</dbReference>
<dbReference type="InterPro" id="IPR025778">
    <property type="entry name" value="Hist-Lys_N-MeTrfase_plant"/>
</dbReference>
<dbReference type="InterPro" id="IPR041355">
    <property type="entry name" value="Pre-SET_CXC"/>
</dbReference>
<dbReference type="InterPro" id="IPR001005">
    <property type="entry name" value="SANT/Myb"/>
</dbReference>
<dbReference type="InterPro" id="IPR001214">
    <property type="entry name" value="SET_dom"/>
</dbReference>
<dbReference type="InterPro" id="IPR046341">
    <property type="entry name" value="SET_dom_sf"/>
</dbReference>
<dbReference type="InterPro" id="IPR033467">
    <property type="entry name" value="Tesmin/TSO1-like_CXC"/>
</dbReference>
<dbReference type="PANTHER" id="PTHR45747">
    <property type="entry name" value="HISTONE-LYSINE N-METHYLTRANSFERASE E(Z)"/>
    <property type="match status" value="1"/>
</dbReference>
<dbReference type="PANTHER" id="PTHR45747:SF14">
    <property type="entry name" value="HISTONE-LYSINE N-METHYLTRANSFERASE EZA1"/>
    <property type="match status" value="1"/>
</dbReference>
<dbReference type="Pfam" id="PF18264">
    <property type="entry name" value="preSET_CXC"/>
    <property type="match status" value="1"/>
</dbReference>
<dbReference type="Pfam" id="PF00856">
    <property type="entry name" value="SET"/>
    <property type="match status" value="1"/>
</dbReference>
<dbReference type="SMART" id="SM01114">
    <property type="entry name" value="CXC"/>
    <property type="match status" value="1"/>
</dbReference>
<dbReference type="SMART" id="SM00317">
    <property type="entry name" value="SET"/>
    <property type="match status" value="1"/>
</dbReference>
<dbReference type="SUPFAM" id="SSF82199">
    <property type="entry name" value="SET domain"/>
    <property type="match status" value="1"/>
</dbReference>
<dbReference type="PROSITE" id="PS51633">
    <property type="entry name" value="CXC"/>
    <property type="match status" value="1"/>
</dbReference>
<dbReference type="PROSITE" id="PS51576">
    <property type="entry name" value="SAM_MT43_EZ"/>
    <property type="match status" value="1"/>
</dbReference>
<dbReference type="PROSITE" id="PS50280">
    <property type="entry name" value="SET"/>
    <property type="match status" value="1"/>
</dbReference>
<reference key="1">
    <citation type="journal article" date="2003" name="Gene">
        <title>A POLYCOMB group gene of rice (Oryza sativa L. subspecies indica), OsiEZ1, codes for a nuclear-localized protein expressed preferentially in young seedlings and during reproductive development.</title>
        <authorList>
            <person name="Thakur J.K."/>
            <person name="Malik M.R."/>
            <person name="Bhatt V."/>
            <person name="Reddy M.K."/>
            <person name="Sopory S.K."/>
            <person name="Tyagi A.K."/>
            <person name="Khurana J.P."/>
        </authorList>
    </citation>
    <scope>NUCLEOTIDE SEQUENCE [MRNA]</scope>
    <scope>FUNCTION</scope>
    <scope>SUBCELLULAR LOCATION</scope>
    <scope>TISSUE SPECIFICITY</scope>
    <scope>DEVELOPMENTAL STAGE</scope>
    <source>
        <strain>cv. Pusa Basmati</strain>
    </source>
</reference>
<protein>
    <recommendedName>
        <fullName evidence="8">Histone-lysine N-methyltransferase EZ1</fullName>
        <shortName evidence="7">OsiEZ1</shortName>
        <ecNumber evidence="3">2.1.1.356</ecNumber>
    </recommendedName>
</protein>
<evidence type="ECO:0000250" key="1">
    <source>
        <dbReference type="UniProtKB" id="Q10MI4"/>
    </source>
</evidence>
<evidence type="ECO:0000255" key="2">
    <source>
        <dbReference type="PROSITE-ProRule" id="PRU00190"/>
    </source>
</evidence>
<evidence type="ECO:0000255" key="3">
    <source>
        <dbReference type="PROSITE-ProRule" id="PRU00909"/>
    </source>
</evidence>
<evidence type="ECO:0000255" key="4">
    <source>
        <dbReference type="PROSITE-ProRule" id="PRU00970"/>
    </source>
</evidence>
<evidence type="ECO:0000256" key="5">
    <source>
        <dbReference type="SAM" id="MobiDB-lite"/>
    </source>
</evidence>
<evidence type="ECO:0000269" key="6">
    <source>
    </source>
</evidence>
<evidence type="ECO:0000303" key="7">
    <source>
    </source>
</evidence>
<evidence type="ECO:0000305" key="8"/>
<evidence type="ECO:0000305" key="9">
    <source>
    </source>
</evidence>
<sequence>MASSSSKASDSSSQRPKRPDQGPSGKDAAGLVVLHGKLAQLKRQVQSTRLAAIKERVEANRKALQVHTCALFDVAAAAEVASRGAEGGNALSRGAAEGHCRLVGWDSASGPGERELVHVQEENLVAGTLVLSSSGGSGASHRTVVQLAKLPVVDKIPPYTTWIFLDKNQRMADDQLVCRRRIYYDPIVNEALICSESDDDVPEPEEEKHVFTEGEDQLIWKATQDHGLSREVLNVLCQFVDATPSEIEERSEVLFEKYEKQSQSSYETDFQLFLGKTMDVALDSFDNLFCRRCLVFDCRLHGCSQNLVFPSEKQPYGHGLDENKRPCGDQRYLRRREVYQDTCNDDRNACTTYNTDSRSSSLKVSATILSESEDSNRDEDNIKSTSIVETSRSKITNSEYADKSVTPPPGDASETENVSPDMPLRTLGRRKISKHASKSNDHSPDKRQKIYSSPFPFAMSVLNKQSVPEIGETCPDSIESAVDQLPSLDDPNKKISTKDMCAGSTTNTTENTLRDNNNNLFISNKEHSISHWSALERDLYLKGIEIFGKNSCLIARNLLSGLKTCMEVASYMYNNGAAMAKRPLSGKSILGDFAEAEQGYMEQDLVARTRICRRKGRARKLKYTWKSAGHPTVRKRIGDGKQWYTQYNPCGCQQMCGKDCACVENGTCCEKYCGCSKSCKNRFRGCHCAKSQCRSRQCPCFAASRECDPDVCRNCWVSCGDGSLGEPLARGDGYQCGNMKLLLKQQQRILLGKSDVAGWGAFIKNPVNRNDYLGEYTGELISHREADKRGKIYDRANSSFLFDLNEQYVLDAYRKGDKLKFANHSSNPNCYAKVMLVAGDHRVGIYAKDRIEASEELFYDYRYGPDQAPAWARRPEGSKKDEASVSHHRAHKVAR</sequence>
<comment type="function">
    <text evidence="1 9">Polycomb group (PcG) protein. Catalytic subunit of some PcG multiprotein complex, which methylates 'Lys-27' of histone H3, leading to transcriptional repression of the affected target genes. PcG proteins act by forming multiprotein complexes, which are required to maintain the transcriptionally repressive state of homeotic genes throughout development. PcG proteins are not required to initiate repression, but to maintain it during later stages of development (By similarity). Involved in histone methylation and transcription regulation (Probable).</text>
</comment>
<comment type="catalytic activity">
    <reaction evidence="3">
        <text>L-lysyl(27)-[histone H3] + 3 S-adenosyl-L-methionine = N(6),N(6),N(6)-trimethyl-L-lysyl(27)-[histone H3] + 3 S-adenosyl-L-homocysteine + 3 H(+)</text>
        <dbReference type="Rhea" id="RHEA:60292"/>
        <dbReference type="Rhea" id="RHEA-COMP:15535"/>
        <dbReference type="Rhea" id="RHEA-COMP:15548"/>
        <dbReference type="ChEBI" id="CHEBI:15378"/>
        <dbReference type="ChEBI" id="CHEBI:29969"/>
        <dbReference type="ChEBI" id="CHEBI:57856"/>
        <dbReference type="ChEBI" id="CHEBI:59789"/>
        <dbReference type="ChEBI" id="CHEBI:61961"/>
        <dbReference type="EC" id="2.1.1.356"/>
    </reaction>
</comment>
<comment type="subunit">
    <text evidence="1">Component of the polycomb repressive complex 2 (PRC2), which methylates 'Lys-27' residues of histone H3 (H3K27me3), leading to transcriptional repression of the affected target gene.</text>
</comment>
<comment type="subcellular location">
    <subcellularLocation>
        <location evidence="6">Nucleus</location>
    </subcellularLocation>
</comment>
<comment type="tissue specificity">
    <text evidence="6">Expressed in roots, leaves, shoots, rachis, anthers and embryos.</text>
</comment>
<comment type="developmental stage">
    <text evidence="6">Expressed in emerging young seedlings from 3 to 4 days after seed imbibition.</text>
</comment>
<comment type="similarity">
    <text evidence="3">Belongs to the class V-like SAM-binding methyltransferase superfamily. Histone-lysine methyltransferase family. EZ subfamily.</text>
</comment>